<name>MNME_STRT1</name>
<accession>Q5LZW3</accession>
<comment type="function">
    <text evidence="1">Exhibits a very high intrinsic GTPase hydrolysis rate. Involved in the addition of a carboxymethylaminomethyl (cmnm) group at the wobble position (U34) of certain tRNAs, forming tRNA-cmnm(5)s(2)U34.</text>
</comment>
<comment type="cofactor">
    <cofactor evidence="1">
        <name>K(+)</name>
        <dbReference type="ChEBI" id="CHEBI:29103"/>
    </cofactor>
    <text evidence="1">Binds 1 potassium ion per subunit.</text>
</comment>
<comment type="subunit">
    <text evidence="1">Homodimer. Heterotetramer of two MnmE and two MnmG subunits.</text>
</comment>
<comment type="subcellular location">
    <subcellularLocation>
        <location evidence="1">Cytoplasm</location>
    </subcellularLocation>
</comment>
<comment type="similarity">
    <text evidence="1">Belongs to the TRAFAC class TrmE-Era-EngA-EngB-Septin-like GTPase superfamily. TrmE GTPase family.</text>
</comment>
<keyword id="KW-0963">Cytoplasm</keyword>
<keyword id="KW-0342">GTP-binding</keyword>
<keyword id="KW-0378">Hydrolase</keyword>
<keyword id="KW-0460">Magnesium</keyword>
<keyword id="KW-0479">Metal-binding</keyword>
<keyword id="KW-0547">Nucleotide-binding</keyword>
<keyword id="KW-0630">Potassium</keyword>
<keyword id="KW-0819">tRNA processing</keyword>
<evidence type="ECO:0000255" key="1">
    <source>
        <dbReference type="HAMAP-Rule" id="MF_00379"/>
    </source>
</evidence>
<sequence length="456" mass="50408">MSITKEFDTITAISTPLGEGAIGIVRLSGTDAIAIANKVFKGKNLETVDSHTINYGHIVENNEIIDEVMVSVMRAPKTFTREDVVEINTHGGVAVTNEILQLLIRSGARMAEPGEFTKRAFLNGRIDLTQAEAVMDLIRAKTDKAMTVAVSQLDGSLKNLINNTRQEILNTLAQVEVNIDYPEYDDVEEVTTNLVREKTQEFQALLENLLATAKRGKILREGLSTAIIGRPNVGKSSLLNNLLREEKAIVTDIEGTTRDVIEEYVNIKGVPLKLIDTAGIRDTDDVVEKIGVERSKKALEEADLVLLVLNSSEPLTDQDRTLLDISQNSNRIILLNKTDLPQAIQTEELPEDLIPISVLKNENIDKIEDRINQLFFDNAGLVEKDATYLSNARHISLIEKALESLEAVNQGLELGMPVDLLQVDMTRTWEILGEITGDAAPDELITQLFSQFCLGK</sequence>
<proteinExistence type="inferred from homology"/>
<gene>
    <name evidence="1" type="primary">mnmE</name>
    <name evidence="1" type="synonym">trmE</name>
    <name type="ordered locus">str0983</name>
</gene>
<organism>
    <name type="scientific">Streptococcus thermophilus (strain CNRZ 1066)</name>
    <dbReference type="NCBI Taxonomy" id="299768"/>
    <lineage>
        <taxon>Bacteria</taxon>
        <taxon>Bacillati</taxon>
        <taxon>Bacillota</taxon>
        <taxon>Bacilli</taxon>
        <taxon>Lactobacillales</taxon>
        <taxon>Streptococcaceae</taxon>
        <taxon>Streptococcus</taxon>
    </lineage>
</organism>
<feature type="chain" id="PRO_1000048895" description="tRNA modification GTPase MnmE">
    <location>
        <begin position="1"/>
        <end position="456"/>
    </location>
</feature>
<feature type="domain" description="TrmE-type G">
    <location>
        <begin position="222"/>
        <end position="376"/>
    </location>
</feature>
<feature type="binding site" evidence="1">
    <location>
        <position position="26"/>
    </location>
    <ligand>
        <name>(6S)-5-formyl-5,6,7,8-tetrahydrofolate</name>
        <dbReference type="ChEBI" id="CHEBI:57457"/>
    </ligand>
</feature>
<feature type="binding site" evidence="1">
    <location>
        <position position="86"/>
    </location>
    <ligand>
        <name>(6S)-5-formyl-5,6,7,8-tetrahydrofolate</name>
        <dbReference type="ChEBI" id="CHEBI:57457"/>
    </ligand>
</feature>
<feature type="binding site" evidence="1">
    <location>
        <position position="125"/>
    </location>
    <ligand>
        <name>(6S)-5-formyl-5,6,7,8-tetrahydrofolate</name>
        <dbReference type="ChEBI" id="CHEBI:57457"/>
    </ligand>
</feature>
<feature type="binding site" evidence="1">
    <location>
        <begin position="232"/>
        <end position="237"/>
    </location>
    <ligand>
        <name>GTP</name>
        <dbReference type="ChEBI" id="CHEBI:37565"/>
    </ligand>
</feature>
<feature type="binding site" evidence="1">
    <location>
        <position position="232"/>
    </location>
    <ligand>
        <name>K(+)</name>
        <dbReference type="ChEBI" id="CHEBI:29103"/>
    </ligand>
</feature>
<feature type="binding site" evidence="1">
    <location>
        <position position="236"/>
    </location>
    <ligand>
        <name>Mg(2+)</name>
        <dbReference type="ChEBI" id="CHEBI:18420"/>
    </ligand>
</feature>
<feature type="binding site" evidence="1">
    <location>
        <begin position="251"/>
        <end position="257"/>
    </location>
    <ligand>
        <name>GTP</name>
        <dbReference type="ChEBI" id="CHEBI:37565"/>
    </ligand>
</feature>
<feature type="binding site" evidence="1">
    <location>
        <position position="251"/>
    </location>
    <ligand>
        <name>K(+)</name>
        <dbReference type="ChEBI" id="CHEBI:29103"/>
    </ligand>
</feature>
<feature type="binding site" evidence="1">
    <location>
        <position position="253"/>
    </location>
    <ligand>
        <name>K(+)</name>
        <dbReference type="ChEBI" id="CHEBI:29103"/>
    </ligand>
</feature>
<feature type="binding site" evidence="1">
    <location>
        <position position="256"/>
    </location>
    <ligand>
        <name>K(+)</name>
        <dbReference type="ChEBI" id="CHEBI:29103"/>
    </ligand>
</feature>
<feature type="binding site" evidence="1">
    <location>
        <position position="257"/>
    </location>
    <ligand>
        <name>Mg(2+)</name>
        <dbReference type="ChEBI" id="CHEBI:18420"/>
    </ligand>
</feature>
<feature type="binding site" evidence="1">
    <location>
        <begin position="276"/>
        <end position="279"/>
    </location>
    <ligand>
        <name>GTP</name>
        <dbReference type="ChEBI" id="CHEBI:37565"/>
    </ligand>
</feature>
<feature type="binding site" evidence="1">
    <location>
        <position position="456"/>
    </location>
    <ligand>
        <name>(6S)-5-formyl-5,6,7,8-tetrahydrofolate</name>
        <dbReference type="ChEBI" id="CHEBI:57457"/>
    </ligand>
</feature>
<reference key="1">
    <citation type="journal article" date="2004" name="Nat. Biotechnol.">
        <title>Complete sequence and comparative genome analysis of the dairy bacterium Streptococcus thermophilus.</title>
        <authorList>
            <person name="Bolotin A."/>
            <person name="Quinquis B."/>
            <person name="Renault P."/>
            <person name="Sorokin A."/>
            <person name="Ehrlich S.D."/>
            <person name="Kulakauskas S."/>
            <person name="Lapidus A."/>
            <person name="Goltsman E."/>
            <person name="Mazur M."/>
            <person name="Pusch G.D."/>
            <person name="Fonstein M."/>
            <person name="Overbeek R."/>
            <person name="Kyprides N."/>
            <person name="Purnelle B."/>
            <person name="Prozzi D."/>
            <person name="Ngui K."/>
            <person name="Masuy D."/>
            <person name="Hancy F."/>
            <person name="Burteau S."/>
            <person name="Boutry M."/>
            <person name="Delcour J."/>
            <person name="Goffeau A."/>
            <person name="Hols P."/>
        </authorList>
    </citation>
    <scope>NUCLEOTIDE SEQUENCE [LARGE SCALE GENOMIC DNA]</scope>
    <source>
        <strain>CNRZ 1066</strain>
    </source>
</reference>
<protein>
    <recommendedName>
        <fullName evidence="1">tRNA modification GTPase MnmE</fullName>
        <ecNumber evidence="1">3.6.-.-</ecNumber>
    </recommendedName>
</protein>
<dbReference type="EC" id="3.6.-.-" evidence="1"/>
<dbReference type="EMBL" id="CP000024">
    <property type="protein sequence ID" value="AAV62562.1"/>
    <property type="molecule type" value="Genomic_DNA"/>
</dbReference>
<dbReference type="RefSeq" id="WP_011227195.1">
    <property type="nucleotide sequence ID" value="NC_006449.1"/>
</dbReference>
<dbReference type="SMR" id="Q5LZW3"/>
<dbReference type="KEGG" id="stc:str0983"/>
<dbReference type="HOGENOM" id="CLU_019624_4_1_9"/>
<dbReference type="GO" id="GO:0005829">
    <property type="term" value="C:cytosol"/>
    <property type="evidence" value="ECO:0007669"/>
    <property type="project" value="TreeGrafter"/>
</dbReference>
<dbReference type="GO" id="GO:0005525">
    <property type="term" value="F:GTP binding"/>
    <property type="evidence" value="ECO:0007669"/>
    <property type="project" value="UniProtKB-UniRule"/>
</dbReference>
<dbReference type="GO" id="GO:0003924">
    <property type="term" value="F:GTPase activity"/>
    <property type="evidence" value="ECO:0007669"/>
    <property type="project" value="UniProtKB-UniRule"/>
</dbReference>
<dbReference type="GO" id="GO:0046872">
    <property type="term" value="F:metal ion binding"/>
    <property type="evidence" value="ECO:0007669"/>
    <property type="project" value="UniProtKB-KW"/>
</dbReference>
<dbReference type="GO" id="GO:0030488">
    <property type="term" value="P:tRNA methylation"/>
    <property type="evidence" value="ECO:0007669"/>
    <property type="project" value="TreeGrafter"/>
</dbReference>
<dbReference type="GO" id="GO:0002098">
    <property type="term" value="P:tRNA wobble uridine modification"/>
    <property type="evidence" value="ECO:0007669"/>
    <property type="project" value="TreeGrafter"/>
</dbReference>
<dbReference type="CDD" id="cd04164">
    <property type="entry name" value="trmE"/>
    <property type="match status" value="1"/>
</dbReference>
<dbReference type="CDD" id="cd14858">
    <property type="entry name" value="TrmE_N"/>
    <property type="match status" value="1"/>
</dbReference>
<dbReference type="FunFam" id="3.30.1360.120:FF:000003">
    <property type="entry name" value="tRNA modification GTPase MnmE"/>
    <property type="match status" value="1"/>
</dbReference>
<dbReference type="FunFam" id="3.40.50.300:FF:000494">
    <property type="entry name" value="tRNA modification GTPase MnmE"/>
    <property type="match status" value="1"/>
</dbReference>
<dbReference type="Gene3D" id="3.40.50.300">
    <property type="entry name" value="P-loop containing nucleotide triphosphate hydrolases"/>
    <property type="match status" value="1"/>
</dbReference>
<dbReference type="Gene3D" id="3.30.1360.120">
    <property type="entry name" value="Probable tRNA modification gtpase trme, domain 1"/>
    <property type="match status" value="1"/>
</dbReference>
<dbReference type="Gene3D" id="1.20.120.430">
    <property type="entry name" value="tRNA modification GTPase MnmE domain 2"/>
    <property type="match status" value="1"/>
</dbReference>
<dbReference type="HAMAP" id="MF_00379">
    <property type="entry name" value="GTPase_MnmE"/>
    <property type="match status" value="1"/>
</dbReference>
<dbReference type="InterPro" id="IPR031168">
    <property type="entry name" value="G_TrmE"/>
</dbReference>
<dbReference type="InterPro" id="IPR006073">
    <property type="entry name" value="GTP-bd"/>
</dbReference>
<dbReference type="InterPro" id="IPR018948">
    <property type="entry name" value="GTP-bd_TrmE_N"/>
</dbReference>
<dbReference type="InterPro" id="IPR004520">
    <property type="entry name" value="GTPase_MnmE"/>
</dbReference>
<dbReference type="InterPro" id="IPR027368">
    <property type="entry name" value="MnmE_dom2"/>
</dbReference>
<dbReference type="InterPro" id="IPR025867">
    <property type="entry name" value="MnmE_helical"/>
</dbReference>
<dbReference type="InterPro" id="IPR027417">
    <property type="entry name" value="P-loop_NTPase"/>
</dbReference>
<dbReference type="InterPro" id="IPR005225">
    <property type="entry name" value="Small_GTP-bd"/>
</dbReference>
<dbReference type="InterPro" id="IPR027266">
    <property type="entry name" value="TrmE/GcvT_dom1"/>
</dbReference>
<dbReference type="NCBIfam" id="TIGR00450">
    <property type="entry name" value="mnmE_trmE_thdF"/>
    <property type="match status" value="1"/>
</dbReference>
<dbReference type="NCBIfam" id="NF003661">
    <property type="entry name" value="PRK05291.1-3"/>
    <property type="match status" value="1"/>
</dbReference>
<dbReference type="NCBIfam" id="TIGR00231">
    <property type="entry name" value="small_GTP"/>
    <property type="match status" value="1"/>
</dbReference>
<dbReference type="PANTHER" id="PTHR42714">
    <property type="entry name" value="TRNA MODIFICATION GTPASE GTPBP3"/>
    <property type="match status" value="1"/>
</dbReference>
<dbReference type="PANTHER" id="PTHR42714:SF2">
    <property type="entry name" value="TRNA MODIFICATION GTPASE GTPBP3, MITOCHONDRIAL"/>
    <property type="match status" value="1"/>
</dbReference>
<dbReference type="Pfam" id="PF01926">
    <property type="entry name" value="MMR_HSR1"/>
    <property type="match status" value="1"/>
</dbReference>
<dbReference type="Pfam" id="PF12631">
    <property type="entry name" value="MnmE_helical"/>
    <property type="match status" value="1"/>
</dbReference>
<dbReference type="Pfam" id="PF10396">
    <property type="entry name" value="TrmE_N"/>
    <property type="match status" value="1"/>
</dbReference>
<dbReference type="SUPFAM" id="SSF52540">
    <property type="entry name" value="P-loop containing nucleoside triphosphate hydrolases"/>
    <property type="match status" value="1"/>
</dbReference>
<dbReference type="SUPFAM" id="SSF116878">
    <property type="entry name" value="TrmE connector domain"/>
    <property type="match status" value="1"/>
</dbReference>
<dbReference type="PROSITE" id="PS51709">
    <property type="entry name" value="G_TRME"/>
    <property type="match status" value="1"/>
</dbReference>